<proteinExistence type="evidence at protein level"/>
<reference key="1">
    <citation type="journal article" date="1988" name="Nucleic Acids Res.">
        <title>Identification and sequence of gene dicB: translation of the division inhibitor from an in-phase internal start.</title>
        <authorList>
            <person name="Cam K."/>
            <person name="Bejar S."/>
            <person name="Gil D."/>
            <person name="Bouche J.-P."/>
        </authorList>
    </citation>
    <scope>NUCLEOTIDE SEQUENCE [GENOMIC DNA]</scope>
</reference>
<reference key="2">
    <citation type="journal article" date="1996" name="DNA Res.">
        <title>A 570-kb DNA sequence of the Escherichia coli K-12 genome corresponding to the 28.0-40.1 min region on the linkage map.</title>
        <authorList>
            <person name="Aiba H."/>
            <person name="Baba T."/>
            <person name="Fujita K."/>
            <person name="Hayashi K."/>
            <person name="Inada T."/>
            <person name="Isono K."/>
            <person name="Itoh T."/>
            <person name="Kasai H."/>
            <person name="Kashimoto K."/>
            <person name="Kimura S."/>
            <person name="Kitakawa M."/>
            <person name="Kitagawa M."/>
            <person name="Makino K."/>
            <person name="Miki T."/>
            <person name="Mizobuchi K."/>
            <person name="Mori H."/>
            <person name="Mori T."/>
            <person name="Motomura K."/>
            <person name="Nakade S."/>
            <person name="Nakamura Y."/>
            <person name="Nashimoto H."/>
            <person name="Nishio Y."/>
            <person name="Oshima T."/>
            <person name="Saito N."/>
            <person name="Sampei G."/>
            <person name="Seki Y."/>
            <person name="Sivasundaram S."/>
            <person name="Tagami H."/>
            <person name="Takeda J."/>
            <person name="Takemoto K."/>
            <person name="Takeuchi Y."/>
            <person name="Wada C."/>
            <person name="Yamamoto Y."/>
            <person name="Horiuchi T."/>
        </authorList>
    </citation>
    <scope>NUCLEOTIDE SEQUENCE [LARGE SCALE GENOMIC DNA]</scope>
    <source>
        <strain>K12 / W3110 / ATCC 27325 / DSM 5911</strain>
    </source>
</reference>
<reference key="3">
    <citation type="journal article" date="1997" name="Science">
        <title>The complete genome sequence of Escherichia coli K-12.</title>
        <authorList>
            <person name="Blattner F.R."/>
            <person name="Plunkett G. III"/>
            <person name="Bloch C.A."/>
            <person name="Perna N.T."/>
            <person name="Burland V."/>
            <person name="Riley M."/>
            <person name="Collado-Vides J."/>
            <person name="Glasner J.D."/>
            <person name="Rode C.K."/>
            <person name="Mayhew G.F."/>
            <person name="Gregor J."/>
            <person name="Davis N.W."/>
            <person name="Kirkpatrick H.A."/>
            <person name="Goeden M.A."/>
            <person name="Rose D.J."/>
            <person name="Mau B."/>
            <person name="Shao Y."/>
        </authorList>
    </citation>
    <scope>NUCLEOTIDE SEQUENCE [LARGE SCALE GENOMIC DNA]</scope>
    <source>
        <strain>K12 / MG1655 / ATCC 47076</strain>
    </source>
</reference>
<reference key="4">
    <citation type="journal article" date="2006" name="Mol. Syst. Biol.">
        <title>Highly accurate genome sequences of Escherichia coli K-12 strains MG1655 and W3110.</title>
        <authorList>
            <person name="Hayashi K."/>
            <person name="Morooka N."/>
            <person name="Yamamoto Y."/>
            <person name="Fujita K."/>
            <person name="Isono K."/>
            <person name="Choi S."/>
            <person name="Ohtsubo E."/>
            <person name="Baba T."/>
            <person name="Wanner B.L."/>
            <person name="Mori H."/>
            <person name="Horiuchi T."/>
        </authorList>
    </citation>
    <scope>NUCLEOTIDE SEQUENCE [LARGE SCALE GENOMIC DNA]</scope>
    <source>
        <strain>K12 / W3110 / ATCC 27325 / DSM 5911</strain>
    </source>
</reference>
<reference key="5">
    <citation type="journal article" date="2008" name="Mol. Microbiol.">
        <title>Small membrane proteins found by comparative genomics and ribosome binding site models.</title>
        <authorList>
            <person name="Hemm M.R."/>
            <person name="Paul B.J."/>
            <person name="Schneider T.D."/>
            <person name="Storz G."/>
            <person name="Rudd K.E."/>
        </authorList>
    </citation>
    <scope>INDUCTION</scope>
    <source>
        <strain>K12 / MG1655 / ATCC 47076</strain>
    </source>
</reference>
<reference key="6">
    <citation type="journal article" date="2011" name="J. Biol. Chem.">
        <title>Membrane localization of small proteins in Escherichia coli.</title>
        <authorList>
            <person name="Fontaine F."/>
            <person name="Fuchs R.T."/>
            <person name="Storz G."/>
        </authorList>
    </citation>
    <scope>SUBCELLULAR LOCATION</scope>
    <source>
        <strain>K12 / MG1655 / ATCC 47076</strain>
    </source>
</reference>
<dbReference type="EMBL" id="X07465">
    <property type="status" value="NOT_ANNOTATED_CDS"/>
    <property type="molecule type" value="Genomic_DNA"/>
</dbReference>
<dbReference type="EMBL" id="U00096">
    <property type="protein sequence ID" value="AAC74645.2"/>
    <property type="molecule type" value="Genomic_DNA"/>
</dbReference>
<dbReference type="EMBL" id="AP009048">
    <property type="protein sequence ID" value="BAA15277.1"/>
    <property type="molecule type" value="Genomic_DNA"/>
</dbReference>
<dbReference type="PIR" id="G64912">
    <property type="entry name" value="G64912"/>
</dbReference>
<dbReference type="RefSeq" id="NP_416090.2">
    <property type="nucleotide sequence ID" value="NC_000913.3"/>
</dbReference>
<dbReference type="RefSeq" id="WP_000344964.1">
    <property type="nucleotide sequence ID" value="NZ_SSUS01000046.1"/>
</dbReference>
<dbReference type="SMR" id="P29009"/>
<dbReference type="FunCoup" id="P29009">
    <property type="interactions" value="3"/>
</dbReference>
<dbReference type="STRING" id="511145.b1572"/>
<dbReference type="ChEMBL" id="CHEMBL3309033"/>
<dbReference type="PaxDb" id="511145-b1572"/>
<dbReference type="EnsemblBacteria" id="AAC74645">
    <property type="protein sequence ID" value="AAC74645"/>
    <property type="gene ID" value="b1572"/>
</dbReference>
<dbReference type="GeneID" id="946176"/>
<dbReference type="KEGG" id="ecj:JW1564"/>
<dbReference type="KEGG" id="eco:b1572"/>
<dbReference type="PATRIC" id="fig|511145.12.peg.1642"/>
<dbReference type="EchoBASE" id="EB1278"/>
<dbReference type="eggNOG" id="ENOG503089M">
    <property type="taxonomic scope" value="Bacteria"/>
</dbReference>
<dbReference type="HOGENOM" id="CLU_209383_0_0_6"/>
<dbReference type="InParanoid" id="P29009"/>
<dbReference type="BioCyc" id="EcoCyc:EG11301-MONOMER"/>
<dbReference type="PRO" id="PR:P29009"/>
<dbReference type="Proteomes" id="UP000000625">
    <property type="component" value="Chromosome"/>
</dbReference>
<dbReference type="GO" id="GO:0005737">
    <property type="term" value="C:cytoplasm"/>
    <property type="evidence" value="ECO:0007669"/>
    <property type="project" value="UniProtKB-SubCell"/>
</dbReference>
<organism>
    <name type="scientific">Escherichia coli (strain K12)</name>
    <dbReference type="NCBI Taxonomy" id="83333"/>
    <lineage>
        <taxon>Bacteria</taxon>
        <taxon>Pseudomonadati</taxon>
        <taxon>Pseudomonadota</taxon>
        <taxon>Gammaproteobacteria</taxon>
        <taxon>Enterobacterales</taxon>
        <taxon>Enterobacteriaceae</taxon>
        <taxon>Escherichia</taxon>
    </lineage>
</organism>
<name>YDFB_ECOLI</name>
<protein>
    <recommendedName>
        <fullName>Uncharacterized protein YdfB</fullName>
    </recommendedName>
</protein>
<evidence type="ECO:0000269" key="1">
    <source>
    </source>
</evidence>
<evidence type="ECO:0000269" key="2">
    <source>
    </source>
</evidence>
<feature type="chain" id="PRO_0000168953" description="Uncharacterized protein YdfB">
    <location>
        <begin position="1"/>
        <end position="42"/>
    </location>
</feature>
<comment type="subcellular location">
    <subcellularLocation>
        <location evidence="2">Cytoplasm</location>
    </subcellularLocation>
    <text>Probably associated with the inner membrane.</text>
</comment>
<comment type="induction">
    <text evidence="1">Constitutively expressed (at protein level).</text>
</comment>
<keyword id="KW-0963">Cytoplasm</keyword>
<keyword id="KW-1185">Reference proteome</keyword>
<sequence length="42" mass="4688">MDFDTIMEKAYEEYFEGLAEGEEALSFSEFKQALSSSAKSNG</sequence>
<accession>P29009</accession>
<accession>P76166</accession>
<gene>
    <name type="primary">ydfB</name>
    <name type="ordered locus">b1572</name>
    <name type="ordered locus">JW1564</name>
</gene>